<feature type="signal peptide" evidence="5">
    <location>
        <begin position="1"/>
        <end position="17"/>
    </location>
</feature>
<feature type="chain" id="PRO_0000034278" description="Thiol:disulfide interchange protein DsbG">
    <location>
        <begin position="18"/>
        <end position="248"/>
    </location>
</feature>
<feature type="disulfide bond" description="Redox-active" evidence="2">
    <location>
        <begin position="126"/>
        <end position="129"/>
    </location>
</feature>
<feature type="mutagenesis site" description="Complete loss of redox activity." evidence="1">
    <original>C</original>
    <variation>A</variation>
    <location>
        <position position="126"/>
    </location>
</feature>
<feature type="mutagenesis site" description="No loss of chaperone activity; when associated with S-129." evidence="1">
    <original>C</original>
    <variation>S</variation>
    <location>
        <position position="126"/>
    </location>
</feature>
<feature type="mutagenesis site" description="Partial loss of redox activity. Traps the protein in complex with ErfK, YbiS and YnhG." evidence="1 4">
    <original>C</original>
    <variation>A</variation>
    <location>
        <position position="129"/>
    </location>
</feature>
<feature type="mutagenesis site" description="No loss of chaperone activity; when associated with S-126." evidence="1 4">
    <original>C</original>
    <variation>S</variation>
    <location>
        <position position="129"/>
    </location>
</feature>
<feature type="helix" evidence="7">
    <location>
        <begin position="22"/>
        <end position="28"/>
    </location>
</feature>
<feature type="turn" evidence="7">
    <location>
        <begin position="29"/>
        <end position="31"/>
    </location>
</feature>
<feature type="strand" evidence="7">
    <location>
        <begin position="32"/>
        <end position="39"/>
    </location>
</feature>
<feature type="helix" evidence="8">
    <location>
        <begin position="41"/>
        <end position="43"/>
    </location>
</feature>
<feature type="strand" evidence="7">
    <location>
        <begin position="45"/>
        <end position="51"/>
    </location>
</feature>
<feature type="strand" evidence="7">
    <location>
        <begin position="54"/>
        <end position="60"/>
    </location>
</feature>
<feature type="strand" evidence="7">
    <location>
        <begin position="67"/>
        <end position="70"/>
    </location>
</feature>
<feature type="helix" evidence="7">
    <location>
        <begin position="80"/>
        <end position="88"/>
    </location>
</feature>
<feature type="helix" evidence="7">
    <location>
        <begin position="92"/>
        <end position="94"/>
    </location>
</feature>
<feature type="helix" evidence="7">
    <location>
        <begin position="95"/>
        <end position="102"/>
    </location>
</feature>
<feature type="strand" evidence="7">
    <location>
        <begin position="107"/>
        <end position="110"/>
    </location>
</feature>
<feature type="strand" evidence="7">
    <location>
        <begin position="115"/>
        <end position="122"/>
    </location>
</feature>
<feature type="helix" evidence="7">
    <location>
        <begin position="127"/>
        <end position="141"/>
    </location>
</feature>
<feature type="strand" evidence="7">
    <location>
        <begin position="144"/>
        <end position="151"/>
    </location>
</feature>
<feature type="helix" evidence="7">
    <location>
        <begin position="159"/>
        <end position="168"/>
    </location>
</feature>
<feature type="strand" evidence="7">
    <location>
        <begin position="169"/>
        <end position="171"/>
    </location>
</feature>
<feature type="helix" evidence="7">
    <location>
        <begin position="172"/>
        <end position="181"/>
    </location>
</feature>
<feature type="turn" evidence="7">
    <location>
        <begin position="182"/>
        <end position="184"/>
    </location>
</feature>
<feature type="helix" evidence="7">
    <location>
        <begin position="196"/>
        <end position="212"/>
    </location>
</feature>
<feature type="strand" evidence="7">
    <location>
        <begin position="219"/>
        <end position="224"/>
    </location>
</feature>
<feature type="turn" evidence="7">
    <location>
        <begin position="225"/>
        <end position="227"/>
    </location>
</feature>
<feature type="strand" evidence="7">
    <location>
        <begin position="228"/>
        <end position="235"/>
    </location>
</feature>
<feature type="helix" evidence="7">
    <location>
        <begin position="238"/>
        <end position="244"/>
    </location>
</feature>
<gene>
    <name type="primary">dsbG</name>
    <name type="synonym">ybdP</name>
    <name type="ordered locus">b0604</name>
    <name type="ordered locus">JW0597</name>
</gene>
<accession>P77202</accession>
<reference key="1">
    <citation type="journal article" date="1997" name="Mol. Microbiol.">
        <title>A new Escherichia coli gene, dsbG, encodes a periplasmic protein involved in disulphide bond formation, required for recycling DsbA/DsbB and DsbC redox proteins.</title>
        <authorList>
            <person name="Andersen C.L."/>
            <person name="Matthey-Dupraz A."/>
            <person name="Missiakas D."/>
            <person name="Raina S."/>
        </authorList>
    </citation>
    <scope>NUCLEOTIDE SEQUENCE [GENOMIC DNA]</scope>
    <scope>PARTIAL PROTEIN SEQUENCE</scope>
    <scope>CHARACTERIZATION</scope>
    <scope>MUTAGENESIS</scope>
    <source>
        <strain>K12 / MC4100 / ATCC 35695 / DSM 6574</strain>
    </source>
</reference>
<reference key="2">
    <citation type="journal article" date="1996" name="DNA Res.">
        <title>A 718-kb DNA sequence of the Escherichia coli K-12 genome corresponding to the 12.7-28.0 min region on the linkage map.</title>
        <authorList>
            <person name="Oshima T."/>
            <person name="Aiba H."/>
            <person name="Baba T."/>
            <person name="Fujita K."/>
            <person name="Hayashi K."/>
            <person name="Honjo A."/>
            <person name="Ikemoto K."/>
            <person name="Inada T."/>
            <person name="Itoh T."/>
            <person name="Kajihara M."/>
            <person name="Kanai K."/>
            <person name="Kashimoto K."/>
            <person name="Kimura S."/>
            <person name="Kitagawa M."/>
            <person name="Makino K."/>
            <person name="Masuda S."/>
            <person name="Miki T."/>
            <person name="Mizobuchi K."/>
            <person name="Mori H."/>
            <person name="Motomura K."/>
            <person name="Nakamura Y."/>
            <person name="Nashimoto H."/>
            <person name="Nishio Y."/>
            <person name="Saito N."/>
            <person name="Sampei G."/>
            <person name="Seki Y."/>
            <person name="Tagami H."/>
            <person name="Takemoto K."/>
            <person name="Wada C."/>
            <person name="Yamamoto Y."/>
            <person name="Yano M."/>
            <person name="Horiuchi T."/>
        </authorList>
    </citation>
    <scope>NUCLEOTIDE SEQUENCE [LARGE SCALE GENOMIC DNA]</scope>
    <source>
        <strain>K12 / W3110 / ATCC 27325 / DSM 5911</strain>
    </source>
</reference>
<reference key="3">
    <citation type="submission" date="1997-01" db="EMBL/GenBank/DDBJ databases">
        <title>Sequence of minutes 4-25 of Escherichia coli.</title>
        <authorList>
            <person name="Chung E."/>
            <person name="Allen E."/>
            <person name="Araujo R."/>
            <person name="Aparicio A.M."/>
            <person name="Davis K."/>
            <person name="Duncan M."/>
            <person name="Federspiel N."/>
            <person name="Hyman R."/>
            <person name="Kalman S."/>
            <person name="Komp C."/>
            <person name="Kurdi O."/>
            <person name="Lew H."/>
            <person name="Lin D."/>
            <person name="Namath A."/>
            <person name="Oefner P."/>
            <person name="Roberts D."/>
            <person name="Schramm S."/>
            <person name="Davis R.W."/>
        </authorList>
    </citation>
    <scope>NUCLEOTIDE SEQUENCE [LARGE SCALE GENOMIC DNA]</scope>
    <source>
        <strain>K12 / MG1655 / ATCC 47076</strain>
    </source>
</reference>
<reference key="4">
    <citation type="journal article" date="1997" name="Science">
        <title>The complete genome sequence of Escherichia coli K-12.</title>
        <authorList>
            <person name="Blattner F.R."/>
            <person name="Plunkett G. III"/>
            <person name="Bloch C.A."/>
            <person name="Perna N.T."/>
            <person name="Burland V."/>
            <person name="Riley M."/>
            <person name="Collado-Vides J."/>
            <person name="Glasner J.D."/>
            <person name="Rode C.K."/>
            <person name="Mayhew G.F."/>
            <person name="Gregor J."/>
            <person name="Davis N.W."/>
            <person name="Kirkpatrick H.A."/>
            <person name="Goeden M.A."/>
            <person name="Rose D.J."/>
            <person name="Mau B."/>
            <person name="Shao Y."/>
        </authorList>
    </citation>
    <scope>NUCLEOTIDE SEQUENCE [LARGE SCALE GENOMIC DNA]</scope>
    <source>
        <strain>K12 / MG1655 / ATCC 47076</strain>
    </source>
</reference>
<reference key="5">
    <citation type="journal article" date="2006" name="Mol. Syst. Biol.">
        <title>Highly accurate genome sequences of Escherichia coli K-12 strains MG1655 and W3110.</title>
        <authorList>
            <person name="Hayashi K."/>
            <person name="Morooka N."/>
            <person name="Yamamoto Y."/>
            <person name="Fujita K."/>
            <person name="Isono K."/>
            <person name="Choi S."/>
            <person name="Ohtsubo E."/>
            <person name="Baba T."/>
            <person name="Wanner B.L."/>
            <person name="Mori H."/>
            <person name="Horiuchi T."/>
        </authorList>
    </citation>
    <scope>NUCLEOTIDE SEQUENCE [LARGE SCALE GENOMIC DNA]</scope>
    <source>
        <strain>K12 / W3110 / ATCC 27325 / DSM 5911</strain>
    </source>
</reference>
<reference key="6">
    <citation type="journal article" date="1998" name="FEBS Lett.">
        <title>The functional properties of DsbG, a thiol-disulfide oxidoreductase from the periplasm of Escherichia coli.</title>
        <authorList>
            <person name="van Straaten M."/>
            <person name="Missiakas D."/>
            <person name="Raina S."/>
            <person name="Darby N.J."/>
        </authorList>
    </citation>
    <scope>PROTEIN SEQUENCE OF 18-22</scope>
    <source>
        <strain>BL21-DE3</strain>
    </source>
</reference>
<reference key="7">
    <citation type="journal article" date="1999" name="J. Biol. Chem.">
        <title>In vivo and in vitro function of the Escherichia coli periplasmic cysteine oxidoreductase DsbG.</title>
        <authorList>
            <person name="Bessette P.H."/>
            <person name="Cotto J.J."/>
            <person name="Gilbert H.F."/>
            <person name="Georgiou G."/>
        </authorList>
    </citation>
    <scope>CHARACTERIZATION</scope>
    <source>
        <strain>BL21-DE3</strain>
    </source>
</reference>
<reference key="8">
    <citation type="journal article" date="2000" name="J. Biol. Chem.">
        <title>DsbG, a protein disulfide isomerase with chaperone activity.</title>
        <authorList>
            <person name="Shao F."/>
            <person name="Bader M.W."/>
            <person name="Jakob U."/>
            <person name="Bardwell J.C.A."/>
        </authorList>
    </citation>
    <scope>CHARACTERIZATION</scope>
    <scope>MUTAGENESIS OF CYS-126 AND CYS-129</scope>
    <source>
        <strain>BL21-DE3</strain>
    </source>
</reference>
<reference key="9">
    <citation type="journal article" date="2009" name="Science">
        <title>A periplasmic reducing system protects single cysteine residues from oxidation.</title>
        <authorList>
            <person name="Depuydt M."/>
            <person name="Leonard S.E."/>
            <person name="Vertommen D."/>
            <person name="Denoncin K."/>
            <person name="Morsomme P."/>
            <person name="Wahni K."/>
            <person name="Messens J."/>
            <person name="Carroll K.S."/>
            <person name="Collet J.F."/>
        </authorList>
    </citation>
    <scope>FUNCTION</scope>
    <scope>INTERACTION WITH ERFK; YBIS AND YNHG</scope>
    <scope>MUTAGENESIS OF CYS-129</scope>
    <scope>DISRUPTION PHENOTYPE</scope>
    <source>
        <strain>K12 / MC1000 / ATCC 39531</strain>
    </source>
</reference>
<reference key="10">
    <citation type="journal article" date="2004" name="Proc. Natl. Acad. Sci. U.S.A.">
        <title>Crystal structures of the DsbG disulfide isomerase reveal an unstable disulfide.</title>
        <authorList>
            <person name="Heras B."/>
            <person name="Edeling M.A."/>
            <person name="Schirra H.J."/>
            <person name="Raina S."/>
            <person name="Martin J.L."/>
        </authorList>
    </citation>
    <scope>X-RAY CRYSTALLOGRAPHY (1.7 ANGSTROMS) OF 18-248</scope>
    <scope>DISULFIDE BOND</scope>
</reference>
<reference key="11">
    <citation type="journal article" date="2007" name="Acta Crystallogr. D">
        <title>Structures of the dimerization domains of the Escherichia coli disulfide-bond isomerase enzymes DsbC and DsbG.</title>
        <authorList>
            <person name="Yeh S.-M."/>
            <person name="Koon N."/>
            <person name="Squire C."/>
            <person name="Metcalf P."/>
        </authorList>
    </citation>
    <scope>X-RAY CRYSTALLOGRAPHY (1.9 ANGSTROMS) OF 19-89</scope>
    <scope>SUBUNIT</scope>
</reference>
<name>DSBG_ECOLI</name>
<keyword id="KW-0002">3D-structure</keyword>
<keyword id="KW-0143">Chaperone</keyword>
<keyword id="KW-0903">Direct protein sequencing</keyword>
<keyword id="KW-1015">Disulfide bond</keyword>
<keyword id="KW-0574">Periplasm</keyword>
<keyword id="KW-0676">Redox-active center</keyword>
<keyword id="KW-1185">Reference proteome</keyword>
<keyword id="KW-0732">Signal</keyword>
<organism>
    <name type="scientific">Escherichia coli (strain K12)</name>
    <dbReference type="NCBI Taxonomy" id="83333"/>
    <lineage>
        <taxon>Bacteria</taxon>
        <taxon>Pseudomonadati</taxon>
        <taxon>Pseudomonadota</taxon>
        <taxon>Gammaproteobacteria</taxon>
        <taxon>Enterobacterales</taxon>
        <taxon>Enterobacteriaceae</taxon>
        <taxon>Escherichia</taxon>
    </lineage>
</organism>
<proteinExistence type="evidence at protein level"/>
<protein>
    <recommendedName>
        <fullName>Thiol:disulfide interchange protein DsbG</fullName>
    </recommendedName>
</protein>
<evidence type="ECO:0000269" key="1">
    <source>
    </source>
</evidence>
<evidence type="ECO:0000269" key="2">
    <source>
    </source>
</evidence>
<evidence type="ECO:0000269" key="3">
    <source>
    </source>
</evidence>
<evidence type="ECO:0000269" key="4">
    <source>
    </source>
</evidence>
<evidence type="ECO:0000269" key="5">
    <source>
    </source>
</evidence>
<evidence type="ECO:0000305" key="6"/>
<evidence type="ECO:0007829" key="7">
    <source>
        <dbReference type="PDB" id="1V58"/>
    </source>
</evidence>
<evidence type="ECO:0007829" key="8">
    <source>
        <dbReference type="PDB" id="2H0G"/>
    </source>
</evidence>
<comment type="function">
    <text evidence="4">Involved in disulfide bond formation. DsbG and DsbC are part of a periplasmic reducing system that controls the level of cysteine sulfenylation, and provides reducing equivalents to rescue oxidatively damaged secreted proteins such as ErfK, YbiS and YnhG. Probably also functions as a disulfide isomerase with a narrower substrate specificity than DsbC. DsbG is maintained in a reduced state by DsbD. Displays chaperone activity in both redox states in vitro.</text>
</comment>
<comment type="subunit">
    <text evidence="3 4">Homodimer. Interacts with ErfK, YbiS and YnhG.</text>
</comment>
<comment type="subcellular location">
    <subcellularLocation>
        <location>Periplasm</location>
    </subcellularLocation>
</comment>
<comment type="disruption phenotype">
    <text evidence="4">No visible phenotype.</text>
</comment>
<comment type="similarity">
    <text evidence="6">Belongs to the thioredoxin family. DsbC subfamily.</text>
</comment>
<comment type="sequence caution" evidence="6">
    <conflict type="erroneous initiation">
        <sequence resource="EMBL-CDS" id="AAB40805"/>
    </conflict>
    <text>Extended N-terminus.</text>
</comment>
<sequence length="248" mass="27495">MLKKILLLALLPAIAFAEELPAPVKAIEKQGITIIKTFDAPGGMKGYLGKYQDMGVTIYLTPDGKHAISGYMYNEKGENLSNTLIEKEIYAPAGREMWQRMEQSHWLLDGKKDAPVIVYVFADPFCPYCKQFWQQARPWVDSGKVQLRTLLVGVIKPESPATAAAILASKDPAKTWQQYEASGGKLKLNVPANVSTEQMKVLSDNEKLMDDLGANVTPAIYYMSKENTLQQAVGLPDQKTLNIIMGNK</sequence>
<dbReference type="EMBL" id="AF000956">
    <property type="protein sequence ID" value="AAC45785.1"/>
    <property type="molecule type" value="Genomic_DNA"/>
</dbReference>
<dbReference type="EMBL" id="U82598">
    <property type="protein sequence ID" value="AAB40805.1"/>
    <property type="status" value="ALT_INIT"/>
    <property type="molecule type" value="Genomic_DNA"/>
</dbReference>
<dbReference type="EMBL" id="U00096">
    <property type="protein sequence ID" value="AAC73705.2"/>
    <property type="molecule type" value="Genomic_DNA"/>
</dbReference>
<dbReference type="EMBL" id="AP009048">
    <property type="protein sequence ID" value="BAA35234.2"/>
    <property type="molecule type" value="Genomic_DNA"/>
</dbReference>
<dbReference type="PIR" id="B64794">
    <property type="entry name" value="B64794"/>
</dbReference>
<dbReference type="RefSeq" id="NP_415137.2">
    <property type="nucleotide sequence ID" value="NC_000913.3"/>
</dbReference>
<dbReference type="RefSeq" id="WP_000913829.1">
    <property type="nucleotide sequence ID" value="NZ_SSZK01000032.1"/>
</dbReference>
<dbReference type="PDB" id="1V57">
    <property type="method" value="X-ray"/>
    <property type="resolution" value="2.00 A"/>
    <property type="chains" value="A/B=18-248"/>
</dbReference>
<dbReference type="PDB" id="1V58">
    <property type="method" value="X-ray"/>
    <property type="resolution" value="1.70 A"/>
    <property type="chains" value="A/B=18-248"/>
</dbReference>
<dbReference type="PDB" id="2H0G">
    <property type="method" value="X-ray"/>
    <property type="resolution" value="2.30 A"/>
    <property type="chains" value="A/B=18-248"/>
</dbReference>
<dbReference type="PDB" id="2H0H">
    <property type="method" value="X-ray"/>
    <property type="resolution" value="1.80 A"/>
    <property type="chains" value="A/B=18-248"/>
</dbReference>
<dbReference type="PDB" id="2H0I">
    <property type="method" value="X-ray"/>
    <property type="resolution" value="2.40 A"/>
    <property type="chains" value="A/B=18-248"/>
</dbReference>
<dbReference type="PDB" id="2IY2">
    <property type="method" value="X-ray"/>
    <property type="resolution" value="1.90 A"/>
    <property type="chains" value="A/B=19-89"/>
</dbReference>
<dbReference type="PDB" id="5G1K">
    <property type="method" value="X-ray"/>
    <property type="resolution" value="1.96 A"/>
    <property type="chains" value="A/B=1-248"/>
</dbReference>
<dbReference type="PDB" id="5G1L">
    <property type="method" value="X-ray"/>
    <property type="resolution" value="1.70 A"/>
    <property type="chains" value="A/B=1-248"/>
</dbReference>
<dbReference type="PDBsum" id="1V57"/>
<dbReference type="PDBsum" id="1V58"/>
<dbReference type="PDBsum" id="2H0G"/>
<dbReference type="PDBsum" id="2H0H"/>
<dbReference type="PDBsum" id="2H0I"/>
<dbReference type="PDBsum" id="2IY2"/>
<dbReference type="PDBsum" id="5G1K"/>
<dbReference type="PDBsum" id="5G1L"/>
<dbReference type="SMR" id="P77202"/>
<dbReference type="BioGRID" id="4260900">
    <property type="interactions" value="184"/>
</dbReference>
<dbReference type="DIP" id="DIP-9478N"/>
<dbReference type="FunCoup" id="P77202">
    <property type="interactions" value="210"/>
</dbReference>
<dbReference type="IntAct" id="P77202">
    <property type="interactions" value="11"/>
</dbReference>
<dbReference type="STRING" id="511145.b0604"/>
<dbReference type="jPOST" id="P77202"/>
<dbReference type="PaxDb" id="511145-b0604"/>
<dbReference type="EnsemblBacteria" id="AAC73705">
    <property type="protein sequence ID" value="AAC73705"/>
    <property type="gene ID" value="b0604"/>
</dbReference>
<dbReference type="GeneID" id="945224"/>
<dbReference type="KEGG" id="ecj:JW0597"/>
<dbReference type="KEGG" id="eco:b0604"/>
<dbReference type="KEGG" id="ecoc:C3026_03020"/>
<dbReference type="PATRIC" id="fig|1411691.4.peg.1664"/>
<dbReference type="EchoBASE" id="EB3306"/>
<dbReference type="eggNOG" id="COG1651">
    <property type="taxonomic scope" value="Bacteria"/>
</dbReference>
<dbReference type="HOGENOM" id="CLU_080090_0_0_6"/>
<dbReference type="InParanoid" id="P77202"/>
<dbReference type="OMA" id="CPYCNMF"/>
<dbReference type="OrthoDB" id="5298214at2"/>
<dbReference type="PhylomeDB" id="P77202"/>
<dbReference type="BioCyc" id="EcoCyc:DSBG-MONOMER"/>
<dbReference type="BioCyc" id="MetaCyc:DSBG-MONOMER"/>
<dbReference type="EvolutionaryTrace" id="P77202"/>
<dbReference type="PRO" id="PR:P77202"/>
<dbReference type="Proteomes" id="UP000000625">
    <property type="component" value="Chromosome"/>
</dbReference>
<dbReference type="GO" id="GO:0030288">
    <property type="term" value="C:outer membrane-bounded periplasmic space"/>
    <property type="evidence" value="ECO:0000314"/>
    <property type="project" value="EcoCyc"/>
</dbReference>
<dbReference type="GO" id="GO:0003756">
    <property type="term" value="F:protein disulfide isomerase activity"/>
    <property type="evidence" value="ECO:0000315"/>
    <property type="project" value="EcoliWiki"/>
</dbReference>
<dbReference type="GO" id="GO:0042803">
    <property type="term" value="F:protein homodimerization activity"/>
    <property type="evidence" value="ECO:0000314"/>
    <property type="project" value="EcoCyc"/>
</dbReference>
<dbReference type="GO" id="GO:0061077">
    <property type="term" value="P:chaperone-mediated protein folding"/>
    <property type="evidence" value="ECO:0000314"/>
    <property type="project" value="EcoCyc"/>
</dbReference>
<dbReference type="CDD" id="cd03020">
    <property type="entry name" value="DsbA_DsbC_DsbG"/>
    <property type="match status" value="1"/>
</dbReference>
<dbReference type="FunFam" id="3.10.450.70:FF:000002">
    <property type="entry name" value="Thiol:disulfide interchange protein"/>
    <property type="match status" value="1"/>
</dbReference>
<dbReference type="FunFam" id="3.40.30.10:FF:000187">
    <property type="entry name" value="Thiol:disulfide interchange protein"/>
    <property type="match status" value="1"/>
</dbReference>
<dbReference type="Gene3D" id="3.10.450.70">
    <property type="entry name" value="Disulphide bond isomerase, DsbC/G, N-terminal"/>
    <property type="match status" value="1"/>
</dbReference>
<dbReference type="Gene3D" id="3.40.30.10">
    <property type="entry name" value="Glutaredoxin"/>
    <property type="match status" value="1"/>
</dbReference>
<dbReference type="InterPro" id="IPR033954">
    <property type="entry name" value="DiS-bond_Isoase_DsbC/G"/>
</dbReference>
<dbReference type="InterPro" id="IPR018950">
    <property type="entry name" value="DiS-bond_isomerase_DsbC/G_N"/>
</dbReference>
<dbReference type="InterPro" id="IPR009094">
    <property type="entry name" value="DiS-bond_isomerase_DsbC/G_N_sf"/>
</dbReference>
<dbReference type="InterPro" id="IPR051470">
    <property type="entry name" value="Thiol:disulfide_interchange"/>
</dbReference>
<dbReference type="InterPro" id="IPR012336">
    <property type="entry name" value="Thioredoxin-like_fold"/>
</dbReference>
<dbReference type="InterPro" id="IPR036249">
    <property type="entry name" value="Thioredoxin-like_sf"/>
</dbReference>
<dbReference type="NCBIfam" id="NF008657">
    <property type="entry name" value="PRK11657.1"/>
    <property type="match status" value="1"/>
</dbReference>
<dbReference type="PANTHER" id="PTHR35272">
    <property type="entry name" value="THIOL:DISULFIDE INTERCHANGE PROTEIN DSBC-RELATED"/>
    <property type="match status" value="1"/>
</dbReference>
<dbReference type="PANTHER" id="PTHR35272:SF4">
    <property type="entry name" value="THIOL:DISULFIDE INTERCHANGE PROTEIN DSBG"/>
    <property type="match status" value="1"/>
</dbReference>
<dbReference type="Pfam" id="PF10411">
    <property type="entry name" value="DsbC_N"/>
    <property type="match status" value="1"/>
</dbReference>
<dbReference type="Pfam" id="PF13098">
    <property type="entry name" value="Thioredoxin_2"/>
    <property type="match status" value="1"/>
</dbReference>
<dbReference type="SUPFAM" id="SSF54423">
    <property type="entry name" value="DsbC/DsbG N-terminal domain-like"/>
    <property type="match status" value="1"/>
</dbReference>
<dbReference type="SUPFAM" id="SSF52833">
    <property type="entry name" value="Thioredoxin-like"/>
    <property type="match status" value="1"/>
</dbReference>